<comment type="function">
    <text evidence="6 8 10 11">Monomer: binds with high affinity to muscular (alpha-1-beta-1-gamma-delta/CHRNA1-CHRNB1-CHRNG-CHRND) nAChR (tested on Torpedo californica, Kd=0.2-4.5 nM) and neuronal alpha-7/CHRNA7 nicotinic acetylcholine receptors (Kd=13-105 nM) (PubMed:18381281, PubMed:22223648, PubMed:9305882). Also inhibits GABA(A) channels (PubMed:26221036). Heteropentamer targets studied are composed of alpha-1-beta-3-gamma-2 (GABRA1-GABRB3-GABRG2) subunits (IC(50)=236 nM), alpha-1-beta-2-gamma-2 (GABRA1-GABRB2-GABRG2) subunits (IC(50)=469 nM), alpha-2-beta-2-gamma-2 (GABRA2-GABRB2-GABRG2) subunits (IC(50)=485 nM), alpha-5-beta-3-gamma-2 (GABRA5-GABRB3-GABRG2) subunits (IC(50)=635 nM), and alpha-2-beta-3-gamma-2 (GABRA2-GABRB3-GABRG2) subunits (IC(50)=1099 nM) (activated by 10 uM GABA) (PubMed:26221036).</text>
</comment>
<comment type="function">
    <text evidence="6 8">Homodimer: binds with high affinity (but lower than the monomeric form) to muscular (IC(50)=9.7 nM) and with low affinity to neuronal alpha-7/CHRNA7 nAChRs (IC(50)=1370 nM) (PubMed:22223648). However, it acquires (compared to the monomeric form) the capacity to block alpha-3/beta-2 (CHRNA3/CHRNB2) nAChRs (PubMed:18381281).</text>
</comment>
<comment type="function">
    <text evidence="8">Heterodimer with cytotoxin 3 (AC P01446): is slightly more active than the homodimer in inhibiting alpha-7/CHRNA7 nAChR and is considerably more active in blocking the alpha-3-beta-2/CHRNA3-CHRNB2 nAChR.</text>
</comment>
<comment type="subunit">
    <text evidence="3 4 5 6 7 8 9 12">Monomer, homo- or heterodimer with cytotoxins 1 (P60305), 2 (AC P01445), and 3 (AC P01446); disulfide-linked.</text>
</comment>
<comment type="subcellular location">
    <subcellularLocation>
        <location evidence="14">Secreted</location>
    </subcellularLocation>
</comment>
<comment type="tissue specificity">
    <text evidence="32">Expressed by the venom gland.</text>
</comment>
<comment type="PTM">
    <text evidence="8">In homodimer alpha-cobratoxin, selective reduction of Cys(26)-Cys(30) in one subunit does not affect the activity against the alpha-7/CHRNA7 nAChR, whereas its reduction in both subunits almost prevents alpha-7/CHRNA7 nAChR recognition. On the contrary, reduction of one or both Cys(26)-Cys(30) disulfide bonds in the homodimer considerably potentiates inhibition of the alpha-3-beta-2/CHRNA3-CHRNB2 nAChR by the toxin.</text>
</comment>
<comment type="miscellaneous">
    <text evidence="6 10 13">Negative results: the monomeric form has no effect on alpha-3/beta-2 (CHRNA3/CHRNB2) nAChR (PubMed:18381281). It does not show any blockade of the nicotine-evoked release of dopamine and does not affect ACh release (PubMed:9840221). Does not inhibit the homopentameric alpha-1 glycine receptor (GLRA1), when tested at 40 uM (PubMed:26221036).</text>
</comment>
<comment type="miscellaneous">
    <text evidence="8 32">Exists in two forms, due to cis-trans isomerization at 6-Thr-Pro-7 (Probable). In the dimeric form, the Pro-7 is extended away from the toxin core whereas in the monomeric form, Pro-7 makes a turn (PubMed:22223648).</text>
</comment>
<comment type="similarity">
    <text evidence="32">Belongs to the three-finger toxin family. Long-chain subfamily. Type II alpha-neurotoxin sub-subfamily.</text>
</comment>
<dbReference type="PIR" id="A01662">
    <property type="entry name" value="N2NJ1S"/>
</dbReference>
<dbReference type="PDB" id="1CTX">
    <property type="method" value="X-ray"/>
    <property type="resolution" value="2.80 A"/>
    <property type="chains" value="A=1-71"/>
</dbReference>
<dbReference type="PDB" id="1LXG">
    <property type="method" value="NMR"/>
    <property type="chains" value="A=1-71"/>
</dbReference>
<dbReference type="PDB" id="1LXH">
    <property type="method" value="NMR"/>
    <property type="chains" value="A=1-71"/>
</dbReference>
<dbReference type="PDB" id="1YI5">
    <property type="method" value="X-ray"/>
    <property type="resolution" value="4.20 A"/>
    <property type="chains" value="F/G/H/I/J=1-71"/>
</dbReference>
<dbReference type="PDB" id="4AEA">
    <property type="method" value="X-ray"/>
    <property type="resolution" value="1.94 A"/>
    <property type="chains" value="A/B=1-71"/>
</dbReference>
<dbReference type="PDB" id="6ZFM">
    <property type="method" value="X-ray"/>
    <property type="resolution" value="1.90 A"/>
    <property type="chains" value="A/B/D/E=1-71"/>
</dbReference>
<dbReference type="PDB" id="7PC0">
    <property type="method" value="EM"/>
    <property type="resolution" value="3.00 A"/>
    <property type="chains" value="K/L=1-71"/>
</dbReference>
<dbReference type="PDB" id="7ULG">
    <property type="method" value="X-ray"/>
    <property type="resolution" value="1.57 A"/>
    <property type="chains" value="A/B/C/D=1-71"/>
</dbReference>
<dbReference type="PDB" id="9BK5">
    <property type="method" value="X-ray"/>
    <property type="resolution" value="2.68 A"/>
    <property type="chains" value="B=1-71"/>
</dbReference>
<dbReference type="PDBsum" id="1CTX"/>
<dbReference type="PDBsum" id="1LXG"/>
<dbReference type="PDBsum" id="1LXH"/>
<dbReference type="PDBsum" id="1YI5"/>
<dbReference type="PDBsum" id="4AEA"/>
<dbReference type="PDBsum" id="6ZFM"/>
<dbReference type="PDBsum" id="7PC0"/>
<dbReference type="PDBsum" id="7ULG"/>
<dbReference type="PDBsum" id="9BK5"/>
<dbReference type="EMDB" id="EMD-13315"/>
<dbReference type="SMR" id="P01391"/>
<dbReference type="IntAct" id="P01391">
    <property type="interactions" value="2"/>
</dbReference>
<dbReference type="BindingDB" id="P01391"/>
<dbReference type="ChEMBL" id="CHEMBL4739673"/>
<dbReference type="ABCD" id="P01391">
    <property type="antibodies" value="48 sequenced antibodies"/>
</dbReference>
<dbReference type="EvolutionaryTrace" id="P01391"/>
<dbReference type="GO" id="GO:0005576">
    <property type="term" value="C:extracellular region"/>
    <property type="evidence" value="ECO:0007669"/>
    <property type="project" value="UniProtKB-SubCell"/>
</dbReference>
<dbReference type="GO" id="GO:0030550">
    <property type="term" value="F:acetylcholine receptor inhibitor activity"/>
    <property type="evidence" value="ECO:0007669"/>
    <property type="project" value="UniProtKB-KW"/>
</dbReference>
<dbReference type="GO" id="GO:0099106">
    <property type="term" value="F:ion channel regulator activity"/>
    <property type="evidence" value="ECO:0007669"/>
    <property type="project" value="UniProtKB-KW"/>
</dbReference>
<dbReference type="GO" id="GO:0090729">
    <property type="term" value="F:toxin activity"/>
    <property type="evidence" value="ECO:0007669"/>
    <property type="project" value="UniProtKB-KW"/>
</dbReference>
<dbReference type="CDD" id="cd00206">
    <property type="entry name" value="TFP_snake_toxin"/>
    <property type="match status" value="1"/>
</dbReference>
<dbReference type="Gene3D" id="2.10.60.10">
    <property type="entry name" value="CD59"/>
    <property type="match status" value="1"/>
</dbReference>
<dbReference type="InterPro" id="IPR003571">
    <property type="entry name" value="Snake_3FTx"/>
</dbReference>
<dbReference type="InterPro" id="IPR045860">
    <property type="entry name" value="Snake_toxin-like_sf"/>
</dbReference>
<dbReference type="InterPro" id="IPR018354">
    <property type="entry name" value="Snake_toxin_con_site"/>
</dbReference>
<dbReference type="InterPro" id="IPR054131">
    <property type="entry name" value="Toxin_cobra-type"/>
</dbReference>
<dbReference type="Pfam" id="PF21947">
    <property type="entry name" value="Toxin_cobra-type"/>
    <property type="match status" value="1"/>
</dbReference>
<dbReference type="SUPFAM" id="SSF57302">
    <property type="entry name" value="Snake toxin-like"/>
    <property type="match status" value="1"/>
</dbReference>
<dbReference type="PROSITE" id="PS00272">
    <property type="entry name" value="SNAKE_TOXIN"/>
    <property type="match status" value="1"/>
</dbReference>
<proteinExistence type="evidence at protein level"/>
<protein>
    <recommendedName>
        <fullName evidence="19 22 23 25 26 27 28">Alpha-cobratoxin</fullName>
        <shortName evidence="21 24">Alpha-CT</shortName>
        <shortName evidence="30">Alpha-CbT</shortName>
        <shortName evidence="15 16 17 18 20 29">Alpha-Cbtx</shortName>
        <shortName evidence="32">Alpha-Ctx</shortName>
    </recommendedName>
    <alternativeName>
        <fullName evidence="32">Alpha-elapitoxin-Nk2a</fullName>
        <shortName evidence="32">Alpha-EPTX-Nk2a</shortName>
    </alternativeName>
    <alternativeName>
        <fullName>Long neurotoxin 1</fullName>
    </alternativeName>
    <alternativeName>
        <fullName evidence="31">Siamensis 3</fullName>
    </alternativeName>
</protein>
<organism>
    <name type="scientific">Naja kaouthia</name>
    <name type="common">Monocled cobra</name>
    <name type="synonym">Naja siamensis</name>
    <dbReference type="NCBI Taxonomy" id="8649"/>
    <lineage>
        <taxon>Eukaryota</taxon>
        <taxon>Metazoa</taxon>
        <taxon>Chordata</taxon>
        <taxon>Craniata</taxon>
        <taxon>Vertebrata</taxon>
        <taxon>Euteleostomi</taxon>
        <taxon>Lepidosauria</taxon>
        <taxon>Squamata</taxon>
        <taxon>Bifurcata</taxon>
        <taxon>Unidentata</taxon>
        <taxon>Episquamata</taxon>
        <taxon>Toxicofera</taxon>
        <taxon>Serpentes</taxon>
        <taxon>Colubroidea</taxon>
        <taxon>Elapidae</taxon>
        <taxon>Elapinae</taxon>
        <taxon>Naja</taxon>
    </lineage>
</organism>
<sequence>IRCFITPDITSKDCPNGHVCYTKTWCDAFCSIRGKRVDLGCAATCPTVKTGVDIQCCSTDNCNPFPTRKRP</sequence>
<name>3L21_NAJKA</name>
<accession>P01391</accession>
<evidence type="ECO:0000269" key="1">
    <source>
    </source>
</evidence>
<evidence type="ECO:0000269" key="2">
    <source>
    </source>
</evidence>
<evidence type="ECO:0000269" key="3">
    <source>
    </source>
</evidence>
<evidence type="ECO:0000269" key="4">
    <source>
    </source>
</evidence>
<evidence type="ECO:0000269" key="5">
    <source>
    </source>
</evidence>
<evidence type="ECO:0000269" key="6">
    <source>
    </source>
</evidence>
<evidence type="ECO:0000269" key="7">
    <source>
    </source>
</evidence>
<evidence type="ECO:0000269" key="8">
    <source>
    </source>
</evidence>
<evidence type="ECO:0000269" key="9">
    <source>
    </source>
</evidence>
<evidence type="ECO:0000269" key="10">
    <source>
    </source>
</evidence>
<evidence type="ECO:0000269" key="11">
    <source>
    </source>
</evidence>
<evidence type="ECO:0000269" key="12">
    <source>
    </source>
</evidence>
<evidence type="ECO:0000269" key="13">
    <source>
    </source>
</evidence>
<evidence type="ECO:0000269" key="14">
    <source ref="1"/>
</evidence>
<evidence type="ECO:0000303" key="15">
    <source>
    </source>
</evidence>
<evidence type="ECO:0000303" key="16">
    <source>
    </source>
</evidence>
<evidence type="ECO:0000303" key="17">
    <source>
    </source>
</evidence>
<evidence type="ECO:0000303" key="18">
    <source>
    </source>
</evidence>
<evidence type="ECO:0000303" key="19">
    <source>
    </source>
</evidence>
<evidence type="ECO:0000303" key="20">
    <source>
    </source>
</evidence>
<evidence type="ECO:0000303" key="21">
    <source>
    </source>
</evidence>
<evidence type="ECO:0000303" key="22">
    <source>
    </source>
</evidence>
<evidence type="ECO:0000303" key="23">
    <source>
    </source>
</evidence>
<evidence type="ECO:0000303" key="24">
    <source>
    </source>
</evidence>
<evidence type="ECO:0000303" key="25">
    <source>
    </source>
</evidence>
<evidence type="ECO:0000303" key="26">
    <source>
    </source>
</evidence>
<evidence type="ECO:0000303" key="27">
    <source>
    </source>
</evidence>
<evidence type="ECO:0000303" key="28">
    <source>
    </source>
</evidence>
<evidence type="ECO:0000303" key="29">
    <source>
    </source>
</evidence>
<evidence type="ECO:0000303" key="30">
    <source>
    </source>
</evidence>
<evidence type="ECO:0000303" key="31">
    <source ref="1"/>
</evidence>
<evidence type="ECO:0000305" key="32"/>
<evidence type="ECO:0000305" key="33">
    <source>
    </source>
</evidence>
<evidence type="ECO:0007744" key="34">
    <source>
        <dbReference type="PDB" id="1CTX"/>
    </source>
</evidence>
<evidence type="ECO:0007744" key="35">
    <source>
        <dbReference type="PDB" id="1LXG"/>
    </source>
</evidence>
<evidence type="ECO:0007744" key="36">
    <source>
        <dbReference type="PDB" id="1LXH"/>
    </source>
</evidence>
<evidence type="ECO:0007744" key="37">
    <source>
        <dbReference type="PDB" id="1YI5"/>
    </source>
</evidence>
<evidence type="ECO:0007744" key="38">
    <source>
        <dbReference type="PDB" id="4AEA"/>
    </source>
</evidence>
<evidence type="ECO:0007829" key="39">
    <source>
        <dbReference type="PDB" id="1LXG"/>
    </source>
</evidence>
<evidence type="ECO:0007829" key="40">
    <source>
        <dbReference type="PDB" id="7ULG"/>
    </source>
</evidence>
<reference key="1">
    <citation type="journal article" date="1973" name="Experientia">
        <title>Chemistry of some potent animal toxins.</title>
        <authorList>
            <person name="Karlsson E."/>
        </authorList>
    </citation>
    <scope>PROTEIN SEQUENCE</scope>
    <scope>SUBCELLULAR LOCATION</scope>
    <source>
        <tissue>Venom</tissue>
    </source>
</reference>
<reference key="2">
    <citation type="journal article" date="2008" name="J. Biol. Chem.">
        <title>Naturally occurring disulfide-bound dimers of three-fingered toxins: a paradigm for biological activity diversification.</title>
        <authorList>
            <person name="Osipov A.V."/>
            <person name="Kasheverov I.E."/>
            <person name="Makarova Y.V."/>
            <person name="Starkov V.G."/>
            <person name="Vorontsova O.V."/>
            <person name="Ziganshin R.K."/>
            <person name="Andreeva T.V."/>
            <person name="Serebryakova M.V."/>
            <person name="Benoit A."/>
            <person name="Hogg R.C."/>
            <person name="Bertrand D."/>
            <person name="Tsetlin V.I."/>
            <person name="Utkin Y.N."/>
        </authorList>
    </citation>
    <scope>PROTEIN SEQUENCE OF 1-17; 24-33 AND 36-68</scope>
    <scope>IDENTIFICATION BY MASS SPECTROMETRY</scope>
    <scope>FUNCTION</scope>
    <scope>SUBUNIT</scope>
    <source>
        <tissue>Venom</tissue>
    </source>
</reference>
<reference key="3">
    <citation type="journal article" date="1980" name="J. Biol. Chem.">
        <title>Fluorescein isothiocyanate-labeled alpha-cobratoxin. Biochemical characterization and interaction with acetylcholine receptor from Electrophorus electricus.</title>
        <authorList>
            <person name="Kang S."/>
            <person name="Maelicke A."/>
        </authorList>
    </citation>
    <scope>FUNCTION</scope>
</reference>
<reference key="4">
    <citation type="journal article" date="1983" name="J. Biol. Chem.">
        <title>The sites of neurotoxicity in alpha-cobratoxin.</title>
        <authorList>
            <person name="Martin B.M."/>
            <person name="Chibber B.A."/>
            <person name="Maelicke A."/>
        </authorList>
    </citation>
    <scope>FUNCTION</scope>
</reference>
<reference key="5">
    <citation type="journal article" date="1990" name="Eur. J. Pharmacol.">
        <title>Alpha-cobratoxin blocks the nicotinic acetylcholine receptor in rat hippocampal neurons.</title>
        <authorList>
            <person name="Alkondon M."/>
            <person name="Albuquerque E.X."/>
        </authorList>
    </citation>
    <scope>FUNCTION</scope>
</reference>
<reference key="6">
    <citation type="journal article" date="1995" name="Naunyn Schmiedebergs Arch. Pharmacol.">
        <title>Alpha-bungarotoxin, kappa-bungarotoxin, alpha-cobratoxin and erabutoxin-b do not affect [3H]acetylcholine release from the rat isolated left hemidiaphragm.</title>
        <authorList>
            <person name="Apel C."/>
            <person name="Ricny J."/>
            <person name="Wagner G."/>
            <person name="Wessler I."/>
        </authorList>
    </citation>
    <scope>FUNCTION</scope>
</reference>
<reference key="7">
    <citation type="journal article" date="1997" name="J. Biol. Chem.">
        <title>Only snake curaremimetic toxins with a fifth disulfide bond have high affinity for the neuronal alpha7 nicotinic receptor.</title>
        <authorList>
            <person name="Servent D."/>
            <person name="Winckler-Dietrich V."/>
            <person name="Hu H.-Y."/>
            <person name="Kessler P."/>
            <person name="Drevet P."/>
            <person name="Bertrand D."/>
            <person name="Menez A."/>
        </authorList>
    </citation>
    <scope>FUNCTION</scope>
</reference>
<reference key="8">
    <citation type="journal article" date="1998" name="Neurochem. Int.">
        <title>Effects of alpha-erabutoxin, alpha-bungarotoxin, alpha-cobratoxin and fasciculin on the nicotine-evoked release of dopamine in the rat striatum in vivo.</title>
        <authorList>
            <person name="Dajas-Bailador F."/>
            <person name="Costa G."/>
            <person name="Dajas F."/>
            <person name="Emmett S."/>
        </authorList>
    </citation>
    <scope>FUNCTION</scope>
</reference>
<reference key="9">
    <citation type="journal article" date="1999" name="J. Biol. Chem.">
        <title>Variability among the sites by which curaremimetic toxins bind to torpedo acetylcholine receptor, as revealed by identification of the functional residues of alpha-cobratoxin.</title>
        <authorList>
            <person name="Antil S."/>
            <person name="Servent D."/>
            <person name="Menez A."/>
        </authorList>
    </citation>
    <scope>FUNCTION</scope>
    <scope>SYNTHESIS</scope>
    <scope>MUTAGENESIS OF LYS-23; TRP-25; ASP-27; PHE-29; ARG-33; ARG-36; LYS-49 AND PHE-65</scope>
    <scope>SITES LYS-23; TRP-25; ASP-27; PHE-29; ARG-33; ARG-36; LYS-49 AND PHE-65</scope>
</reference>
<reference key="10">
    <citation type="journal article" date="2000" name="J. Biol. Chem.">
        <title>Molecular determinants by which a long chain toxin from snake venom interacts with the neuronal alpha 7-nicotinic acetylcholine receptor.</title>
        <authorList>
            <person name="Antil-Delbeke S."/>
            <person name="Gaillard C."/>
            <person name="Tamiya T."/>
            <person name="Corringer P.-J."/>
            <person name="Changeux J.-P."/>
            <person name="Servent D."/>
            <person name="Menez A."/>
        </authorList>
    </citation>
    <scope>MUTAGENESIS OF TRP-25; ASP-27; ALA-28; PHE-29; ARG-33; LYS-35; ARG-36 AND PHE-65</scope>
    <scope>SITES TRP-25; ASP-27; ALA-28; PHE-29; ARG-33; LYS-35; ARG-36 AND PHE-65</scope>
</reference>
<reference key="11">
    <citation type="journal article" date="2015" name="J. Biol. Chem.">
        <title>Neurotoxins from snake venoms and alpha-conotoxin ImI inhibit functionally active ionotropic gamma-aminobutyric acid (GABA) receptors.</title>
        <authorList>
            <person name="Kudryavtsev D.S."/>
            <person name="Shelukhina I.V."/>
            <person name="Son L.V."/>
            <person name="Ojomoko L.O."/>
            <person name="Kryukova E.V."/>
            <person name="Lyukmanova E.N."/>
            <person name="Zhmak M.N."/>
            <person name="Dolgikh D.A."/>
            <person name="Ivanov I.A."/>
            <person name="Kasheverov I.E."/>
            <person name="Starkov V.G."/>
            <person name="Ramerstorfer J."/>
            <person name="Sieghart W."/>
            <person name="Tsetlin V.I."/>
            <person name="Utkin Y.N."/>
        </authorList>
    </citation>
    <scope>FUNCTION</scope>
    <source>
        <tissue>Venom</tissue>
    </source>
</reference>
<reference key="12">
    <citation type="journal article" date="2018" name="Neuropharmacology">
        <title>Species specificity of rat and human alpha7 nicotinic acetylcholine receptors towards different classes of peptide and protein antagonists.</title>
        <authorList>
            <person name="Yu J."/>
            <person name="Zhu X."/>
            <person name="Zhang L."/>
            <person name="Kudryavtsev D."/>
            <person name="Kasheverov I."/>
            <person name="Lei Y."/>
            <person name="Zhangsun D."/>
            <person name="Tsetlin V."/>
            <person name="Luo S."/>
        </authorList>
    </citation>
    <scope>FUNCTION ON ALPHA-7/CHRNA7 NACHR</scope>
    <scope>SYNTHESIS</scope>
</reference>
<reference key="13">
    <citation type="journal article" date="2002" name="Proc. Natl. Acad. Sci. U.S.A.">
        <title>Experimentally based model of a complex between a snake toxin and the alpha 7 nicotinic receptor.</title>
        <authorList>
            <person name="Fruchart-Gaillard C."/>
            <person name="Gilquin B."/>
            <person name="Antil-Delbeke S."/>
            <person name="Le Novere N."/>
            <person name="Tamiya T."/>
            <person name="Corringer P.-J."/>
            <person name="Changeux J.-P."/>
            <person name="Menez A."/>
            <person name="Servent D."/>
        </authorList>
    </citation>
    <scope>3D-STRUCTURE MODELING</scope>
</reference>
<reference key="14">
    <citation type="journal article" date="1980" name="Proc. Natl. Acad. Sci. U.S.A.">
        <title>Three-dimensional structure of the 'long' neurotoxin from cobra venom.</title>
        <authorList>
            <person name="Walkinshaw M.D."/>
            <person name="Saenger W."/>
            <person name="Maelicke A."/>
        </authorList>
    </citation>
    <scope>X-RAY CRYSTALLOGRAPHY (2.8 ANGSTROMS)</scope>
    <scope>DISULFIDE BONDS</scope>
</reference>
<reference key="15">
    <citation type="journal article" date="1991" name="J. Biol. Chem.">
        <title>The refined crystal structure of alpha-cobratoxin from Naja naja siamensis at 2.4-A resolution.</title>
        <authorList>
            <person name="Betzel C."/>
            <person name="Lange G."/>
            <person name="Pal G.P."/>
            <person name="Wilson K.S."/>
            <person name="Maelicke A."/>
            <person name="Saenger W."/>
        </authorList>
    </citation>
    <scope>X-RAY CRYSTALLOGRAPHY (2.4 ANGSTROMS)</scope>
    <scope>DISULFIDE BONDS</scope>
</reference>
<reference key="16">
    <citation type="journal article" date="1990" name="Int. J. Pept. Protein Res.">
        <title>Rapid determination and NMR assignments of antiparallel sheets and helices of a scorpion and a cobra toxin.</title>
        <authorList>
            <person name="Laplante S.R."/>
            <person name="Mikou A."/>
            <person name="Robin M."/>
            <person name="Guittet E."/>
            <person name="Delsuc M.-A."/>
            <person name="Charpentier I."/>
            <person name="Lallemand J.-Y."/>
        </authorList>
    </citation>
    <scope>STRUCTURE BY NMR</scope>
    <scope>DISULFIDE BONDS</scope>
</reference>
<reference key="17">
    <citation type="journal article" date="1992" name="Biochemistry">
        <title>Alpha-cobratoxin: proton NMR assignments and solution structure.</title>
        <authorList>
            <person name="le Goas R."/>
            <person name="Laplante S.R."/>
            <person name="Mikou A."/>
            <person name="Delsuc M.-A."/>
            <person name="Guittet E."/>
            <person name="Robin M."/>
            <person name="Charpentier I."/>
            <person name="Lallemand J.-Y."/>
        </authorList>
    </citation>
    <scope>STRUCTURE BY NMR</scope>
    <scope>DISULFIDE BONDS</scope>
</reference>
<reference key="18">
    <citation type="journal article" date="2002" name="J. Biol. Chem.">
        <title>NMR-based binding screen and structural analysis of the complex formed between alpha-cobratoxin and an 18-mer cognate peptide derived from the alpha-1 subunit of the nicotinic acetylcholine receptor from Torpedo californica.</title>
        <authorList>
            <person name="Zeng H."/>
            <person name="Hawrot E."/>
        </authorList>
    </citation>
    <scope>STRUCTURE BY NMR</scope>
    <scope>DISULFIDE BONDS</scope>
</reference>
<reference key="19">
    <citation type="journal article" date="2005" name="EMBO J.">
        <title>Crystal structure of a Cbtx-AChBP complex reveals essential interactions between snake alpha-neurotoxins and nicotinic receptors.</title>
        <authorList>
            <person name="Bourne Y."/>
            <person name="Talley T.T."/>
            <person name="Hansen S.B."/>
            <person name="Taylor P."/>
            <person name="Marchot P."/>
        </authorList>
    </citation>
    <scope>X-RAY CRYSTALLOGRAPHY (4.2 ANGSTROMS)</scope>
    <scope>DISULFIDE BONDS</scope>
</reference>
<reference key="20">
    <citation type="journal article" date="2006" name="EMBO J.">
        <authorList>
            <person name="Bourne Y."/>
            <person name="Talley T.T."/>
            <person name="Hansen S.B."/>
            <person name="Taylor P."/>
            <person name="Marchot P."/>
        </authorList>
    </citation>
    <scope>ERRATUM OF PUBMED:15791209</scope>
</reference>
<reference key="21">
    <citation type="journal article" date="2012" name="J. Biol. Chem.">
        <title>Dimeric alpha-cobratoxin X-ray structure: localization of intermolecular disulfides and possible mode of binding to nicotinic acetylcholine receptors.</title>
        <authorList>
            <person name="Osipov A.V."/>
            <person name="Rucktooa P."/>
            <person name="Kasheverov I.E."/>
            <person name="Filkin S.Y."/>
            <person name="Starkov V.G."/>
            <person name="Andreeva T.V."/>
            <person name="Sixma T.K."/>
            <person name="Bertrand D."/>
            <person name="Utkin Y.N."/>
            <person name="Tsetlin V.I."/>
        </authorList>
    </citation>
    <scope>X-RAY CRYSTALLOGRAPHY (1.94 ANGSTROMS)</scope>
    <scope>DISULFIDE BOND (HOMODIMER)</scope>
    <scope>FUNCTION</scope>
    <scope>SUBUNIT</scope>
    <source>
        <tissue>Venom</tissue>
    </source>
</reference>
<feature type="chain" id="PRO_0000093554" description="Alpha-cobratoxin" evidence="14">
    <location>
        <begin position="1"/>
        <end position="71"/>
    </location>
</feature>
<feature type="site" description="Binds to Torpedo AChR" evidence="1">
    <location>
        <position position="23"/>
    </location>
</feature>
<feature type="site" description="Binds to both neuronal alpha-7/CHRNA7 and Torpedo AChRs" evidence="1 2">
    <location>
        <position position="25"/>
    </location>
</feature>
<feature type="site" description="Binds to both neuronal alpha-7/CHRNA7 and Torpedo AChRs" evidence="1 2">
    <location>
        <position position="27"/>
    </location>
</feature>
<feature type="site" description="Binds to alpha-7/CHRNA7 AChR" evidence="2">
    <location>
        <position position="28"/>
    </location>
</feature>
<feature type="site" description="Binds to both neuronal alpha-7/CHRNA7 and Torpedo AChRs" evidence="1 2">
    <location>
        <position position="29"/>
    </location>
</feature>
<feature type="site" description="Binds to both neuronal alpha-7/CHRNA7 and Torpedo AChRs" evidence="1 2">
    <location>
        <position position="33"/>
    </location>
</feature>
<feature type="site" description="Binds to alpha-7/CHRNA7 AChR" evidence="2">
    <location>
        <position position="35"/>
    </location>
</feature>
<feature type="site" description="Binds to both neuronal alpha-7/CHRNA7 and Torpedo AChRs, may be important for inhibition of GABA(A) receptors" evidence="1 2 33">
    <location>
        <position position="36"/>
    </location>
</feature>
<feature type="site" description="Binds to Torpedo AChR" evidence="1">
    <location>
        <position position="49"/>
    </location>
</feature>
<feature type="site" description="Binds to both neuronal alpha-7/CHRNA7 and Torpedo AChRs" evidence="1 2">
    <location>
        <position position="65"/>
    </location>
</feature>
<feature type="disulfide bond" description="In monomer, partial" evidence="3 4 5 7 9 12 34 35 36 37">
    <location>
        <begin position="3"/>
        <end position="20"/>
    </location>
</feature>
<feature type="disulfide bond" description="Interchain (with C-20); in homodimer; partial" evidence="8 38">
    <location>
        <position position="3"/>
    </location>
</feature>
<feature type="disulfide bond" evidence="3 4 5 7 8 9 12 34 35 36 37 38">
    <location>
        <begin position="14"/>
        <end position="41"/>
    </location>
</feature>
<feature type="disulfide bond" description="Interchain (with C-3); in homodimer; partial" evidence="8 38">
    <location>
        <position position="20"/>
    </location>
</feature>
<feature type="disulfide bond" evidence="3 4 5 7 8 9 12 34 35 36 37 38">
    <location>
        <begin position="26"/>
        <end position="30"/>
    </location>
</feature>
<feature type="disulfide bond" evidence="3 4 5 7 8 9 12 34 35 36 37 38">
    <location>
        <begin position="45"/>
        <end position="56"/>
    </location>
</feature>
<feature type="disulfide bond" evidence="3 4 5 7 8 9 12 34 35 36 37 38">
    <location>
        <begin position="57"/>
        <end position="62"/>
    </location>
</feature>
<feature type="mutagenesis site" description="2-fold and 28-fold decrease in affinity for Torpedo AChRs." evidence="1">
    <original>K</original>
    <variation>E</variation>
    <location>
        <position position="23"/>
    </location>
</feature>
<feature type="mutagenesis site" description="11-fold decrease in affinity for Torpedo AChRs and 6-fold decrease in affinity for neuronal alpha-7/CHRNA7 AChR." evidence="1 2">
    <original>W</original>
    <variation>A</variation>
    <location>
        <position position="25"/>
    </location>
</feature>
<feature type="mutagenesis site" description="31-fold decrease in affinity for Torpedo AChRs and 50-fold decrease in affinity for neuronal alpha-7/CHRNA7 AChR." evidence="1 2">
    <original>D</original>
    <variation>R</variation>
    <location>
        <position position="27"/>
    </location>
</feature>
<feature type="mutagenesis site" description="5-fold decrease in affinity for neuronal alpha-7/CHRNA7 AChR." evidence="2">
    <original>A</original>
    <variation>G</variation>
    <location>
        <position position="28"/>
    </location>
</feature>
<feature type="mutagenesis site" description="12-fold decrease in affinity for Torpedo AChRs and 74-fold decrease in affinity for neuronal alpha-7/CHRNA7 AChR." evidence="1 2">
    <original>F</original>
    <variation>A</variation>
    <location>
        <position position="29"/>
    </location>
</feature>
<feature type="mutagenesis site" description="767-fold decrease in affinity for Torpedo AChRs and 339-fold decrease in affinity for neuronal alpha-7/CHRNA7 AChR." evidence="1 2">
    <original>R</original>
    <variation>E</variation>
    <location>
        <position position="33"/>
    </location>
</feature>
<feature type="mutagenesis site" description="11-fold decrease in affinity for neuronal alpha-7/CHRNA7 AChR." evidence="2">
    <original>K</original>
    <variation>A</variation>
    <location>
        <position position="35"/>
    </location>
</feature>
<feature type="mutagenesis site" description="16-fold decrease in affinity for Torpedo AChRs." evidence="1 2">
    <original>R</original>
    <variation>A</variation>
    <location>
        <position position="36"/>
    </location>
</feature>
<feature type="mutagenesis site" description="3-fold and 53-fold decrease in affinity for Torpedo AChRs." evidence="1">
    <original>K</original>
    <variation>E</variation>
    <location>
        <position position="49"/>
    </location>
</feature>
<feature type="mutagenesis site" description="7-fold decrease in affinity for Torpedo AChRs and 15-fold decrease in affinity for neuronal alpha-7/CHRNA7 AChR." evidence="1 2">
    <original>F</original>
    <variation>A</variation>
    <location>
        <position position="65"/>
    </location>
</feature>
<feature type="strand" evidence="40">
    <location>
        <begin position="1"/>
        <end position="5"/>
    </location>
</feature>
<feature type="turn" evidence="40">
    <location>
        <begin position="6"/>
        <end position="9"/>
    </location>
</feature>
<feature type="strand" evidence="40">
    <location>
        <begin position="10"/>
        <end position="14"/>
    </location>
</feature>
<feature type="strand" evidence="40">
    <location>
        <begin position="19"/>
        <end position="25"/>
    </location>
</feature>
<feature type="turn" evidence="39">
    <location>
        <begin position="27"/>
        <end position="29"/>
    </location>
</feature>
<feature type="helix" evidence="40">
    <location>
        <begin position="30"/>
        <end position="33"/>
    </location>
</feature>
<feature type="strand" evidence="40">
    <location>
        <begin position="36"/>
        <end position="44"/>
    </location>
</feature>
<feature type="strand" evidence="40">
    <location>
        <begin position="52"/>
        <end position="57"/>
    </location>
</feature>
<feature type="strand" evidence="39">
    <location>
        <begin position="59"/>
        <end position="63"/>
    </location>
</feature>
<keyword id="KW-0002">3D-structure</keyword>
<keyword id="KW-0008">Acetylcholine receptor inhibiting toxin</keyword>
<keyword id="KW-0903">Direct protein sequencing</keyword>
<keyword id="KW-1015">Disulfide bond</keyword>
<keyword id="KW-0872">Ion channel impairing toxin</keyword>
<keyword id="KW-0528">Neurotoxin</keyword>
<keyword id="KW-0629">Postsynaptic neurotoxin</keyword>
<keyword id="KW-0964">Secreted</keyword>
<keyword id="KW-0800">Toxin</keyword>